<keyword id="KW-0066">ATP synthesis</keyword>
<keyword id="KW-0138">CF(0)</keyword>
<keyword id="KW-0375">Hydrogen ion transport</keyword>
<keyword id="KW-0406">Ion transport</keyword>
<keyword id="KW-0472">Membrane</keyword>
<keyword id="KW-0496">Mitochondrion</keyword>
<keyword id="KW-0999">Mitochondrion inner membrane</keyword>
<keyword id="KW-0691">RNA editing</keyword>
<keyword id="KW-0812">Transmembrane</keyword>
<keyword id="KW-1133">Transmembrane helix</keyword>
<keyword id="KW-0813">Transport</keyword>
<gene>
    <name type="primary">ATP6</name>
</gene>
<accession>P05500</accession>
<protein>
    <recommendedName>
        <fullName>ATP synthase subunit a</fullName>
    </recommendedName>
    <alternativeName>
        <fullName>F-ATPase protein 6</fullName>
    </alternativeName>
</protein>
<sequence>MKRFYKTAFFSEIGSEEVSHFWADTMSSHSPLEQFSILPLIPMNIGNLYFSFTNSSLFMLLTLSLVLLLVNFVTKKGGGNLVPNAWQSLVELIYDFVLNLVNEQIGGLSGNVKQKFFPCILVTFTFLLFCNLQGMIPYSFTVTSHFLITLGLSFSIFIGITIVGFQRNGLHFLSFLLPAGVPLPLAPFLVLLELISYCFRALSLGIRLFANMMAGHSLVKILSGFAWTMLCMNDLFYFIGDLGPLFIVLALTGLELGVAILQAYVFTILICIYLNDAINLH</sequence>
<feature type="chain" id="PRO_0000082143" description="ATP synthase subunit a">
    <location>
        <begin position="1"/>
        <end position="281"/>
    </location>
</feature>
<feature type="transmembrane region" description="Helical" evidence="1">
    <location>
        <begin position="50"/>
        <end position="70"/>
    </location>
</feature>
<feature type="transmembrane region" description="Helical" evidence="1">
    <location>
        <begin position="116"/>
        <end position="136"/>
    </location>
</feature>
<feature type="transmembrane region" description="Helical" evidence="1">
    <location>
        <begin position="145"/>
        <end position="165"/>
    </location>
</feature>
<feature type="transmembrane region" description="Helical" evidence="1">
    <location>
        <begin position="172"/>
        <end position="192"/>
    </location>
</feature>
<feature type="transmembrane region" description="Helical" evidence="1">
    <location>
        <begin position="219"/>
        <end position="239"/>
    </location>
</feature>
<feature type="transmembrane region" description="Helical" evidence="1">
    <location>
        <begin position="246"/>
        <end position="266"/>
    </location>
</feature>
<reference key="1">
    <citation type="journal article" date="1987" name="Nucleic Acids Res.">
        <title>Nucleotide sequence of the Oenothera ATPase subunit 6 gene.</title>
        <authorList>
            <person name="Schuster W."/>
            <person name="Brennicke A."/>
        </authorList>
    </citation>
    <scope>NUCLEOTIDE SEQUENCE [GENOMIC DNA]</scope>
    <source>
        <strain>cv. Munzia</strain>
    </source>
</reference>
<reference key="2">
    <citation type="journal article" date="1991" name="FEBS Lett.">
        <title>RNA editing in ATPase subunit 6 mRNAs in Oenothera mitochondria. A new termination codon shortens the reading frame by 35 amino acids.</title>
        <authorList>
            <person name="Schuster W."/>
            <person name="Brennicke A."/>
        </authorList>
    </citation>
    <scope>RNA EDITING</scope>
</reference>
<name>ATP6_OENBE</name>
<geneLocation type="mitochondrion"/>
<organism>
    <name type="scientific">Oenothera berteroana</name>
    <name type="common">Bertero's evening primrose</name>
    <dbReference type="NCBI Taxonomy" id="3950"/>
    <lineage>
        <taxon>Eukaryota</taxon>
        <taxon>Viridiplantae</taxon>
        <taxon>Streptophyta</taxon>
        <taxon>Embryophyta</taxon>
        <taxon>Tracheophyta</taxon>
        <taxon>Spermatophyta</taxon>
        <taxon>Magnoliopsida</taxon>
        <taxon>eudicotyledons</taxon>
        <taxon>Gunneridae</taxon>
        <taxon>Pentapetalae</taxon>
        <taxon>rosids</taxon>
        <taxon>malvids</taxon>
        <taxon>Myrtales</taxon>
        <taxon>Onagraceae</taxon>
        <taxon>Onagroideae</taxon>
        <taxon>Onagreae</taxon>
        <taxon>Oenothera</taxon>
    </lineage>
</organism>
<proteinExistence type="evidence at transcript level"/>
<evidence type="ECO:0000255" key="1"/>
<evidence type="ECO:0000269" key="2">
    <source>
    </source>
</evidence>
<evidence type="ECO:0000305" key="3"/>
<dbReference type="EMBL" id="Y00465">
    <property type="protein sequence ID" value="CAA68527.1"/>
    <property type="status" value="ALT_SEQ"/>
    <property type="molecule type" value="Genomic_DNA"/>
</dbReference>
<dbReference type="SMR" id="P05500"/>
<dbReference type="GO" id="GO:0005743">
    <property type="term" value="C:mitochondrial inner membrane"/>
    <property type="evidence" value="ECO:0007669"/>
    <property type="project" value="UniProtKB-SubCell"/>
</dbReference>
<dbReference type="GO" id="GO:0045259">
    <property type="term" value="C:proton-transporting ATP synthase complex"/>
    <property type="evidence" value="ECO:0007669"/>
    <property type="project" value="UniProtKB-KW"/>
</dbReference>
<dbReference type="GO" id="GO:0046933">
    <property type="term" value="F:proton-transporting ATP synthase activity, rotational mechanism"/>
    <property type="evidence" value="ECO:0007669"/>
    <property type="project" value="TreeGrafter"/>
</dbReference>
<dbReference type="CDD" id="cd00310">
    <property type="entry name" value="ATP-synt_Fo_a_6"/>
    <property type="match status" value="1"/>
</dbReference>
<dbReference type="FunFam" id="1.20.120.220:FF:000003">
    <property type="entry name" value="ATP synthase subunit a"/>
    <property type="match status" value="1"/>
</dbReference>
<dbReference type="Gene3D" id="1.20.120.220">
    <property type="entry name" value="ATP synthase, F0 complex, subunit A"/>
    <property type="match status" value="1"/>
</dbReference>
<dbReference type="HAMAP" id="MF_01393">
    <property type="entry name" value="ATP_synth_a_bact"/>
    <property type="match status" value="1"/>
</dbReference>
<dbReference type="InterPro" id="IPR000568">
    <property type="entry name" value="ATP_synth_F0_asu"/>
</dbReference>
<dbReference type="InterPro" id="IPR023011">
    <property type="entry name" value="ATP_synth_F0_asu_AS"/>
</dbReference>
<dbReference type="InterPro" id="IPR045083">
    <property type="entry name" value="ATP_synth_F0_asu_bact/mt"/>
</dbReference>
<dbReference type="InterPro" id="IPR035908">
    <property type="entry name" value="F0_ATP_A_sf"/>
</dbReference>
<dbReference type="NCBIfam" id="TIGR01131">
    <property type="entry name" value="ATP_synt_6_or_A"/>
    <property type="match status" value="1"/>
</dbReference>
<dbReference type="NCBIfam" id="NF004482">
    <property type="entry name" value="PRK05815.2-4"/>
    <property type="match status" value="1"/>
</dbReference>
<dbReference type="PANTHER" id="PTHR11410">
    <property type="entry name" value="ATP SYNTHASE SUBUNIT A"/>
    <property type="match status" value="1"/>
</dbReference>
<dbReference type="PANTHER" id="PTHR11410:SF0">
    <property type="entry name" value="ATP SYNTHASE SUBUNIT A"/>
    <property type="match status" value="1"/>
</dbReference>
<dbReference type="Pfam" id="PF00119">
    <property type="entry name" value="ATP-synt_A"/>
    <property type="match status" value="1"/>
</dbReference>
<dbReference type="PRINTS" id="PR00123">
    <property type="entry name" value="ATPASEA"/>
</dbReference>
<dbReference type="SUPFAM" id="SSF81336">
    <property type="entry name" value="F1F0 ATP synthase subunit A"/>
    <property type="match status" value="1"/>
</dbReference>
<dbReference type="PROSITE" id="PS00449">
    <property type="entry name" value="ATPASE_A"/>
    <property type="match status" value="1"/>
</dbReference>
<comment type="function">
    <text>Mitochondrial membrane ATP synthase (F(1)F(0) ATP synthase or Complex V) produces ATP from ADP in the presence of a proton gradient across the membrane which is generated by electron transport complexes of the respiratory chain. F-type ATPases consist of two structural domains, F(1) - containing the extramembraneous catalytic core and F(0) - containing the membrane proton channel, linked together by a central stalk and a peripheral stalk. During catalysis, ATP synthesis in the catalytic domain of F(1) is coupled via a rotary mechanism of the central stalk subunits to proton translocation. Key component of the proton channel; it may play a direct role in the translocation of protons across the membrane.</text>
</comment>
<comment type="subunit">
    <text>F-type ATPases have 2 components, CF(1) - the catalytic core - and CF(0) - the membrane proton channel. CF(1) has five subunits: alpha(3), beta(3), gamma(1), delta(1), epsilon(1). CF(0) has three main subunits: a, b and c.</text>
</comment>
<comment type="subcellular location">
    <subcellularLocation>
        <location>Mitochondrion inner membrane</location>
        <topology>Multi-pass membrane protein</topology>
    </subcellularLocation>
</comment>
<comment type="RNA editing">
    <location>
        <position position="55" evidence="2"/>
    </location>
    <location>
        <position position="81" evidence="2"/>
    </location>
    <location>
        <position position="98" evidence="2"/>
    </location>
    <location>
        <position position="100" evidence="2"/>
    </location>
    <location>
        <position position="119" evidence="2"/>
    </location>
    <location>
        <position position="121" evidence="2"/>
    </location>
    <location>
        <position position="127" evidence="2"/>
    </location>
    <location>
        <position position="130" evidence="2"/>
    </location>
    <location>
        <position position="132" evidence="2"/>
    </location>
    <location>
        <position position="176" evidence="2"/>
    </location>
    <location>
        <position position="196" evidence="2"/>
    </location>
    <location>
        <position position="197" evidence="2"/>
    </location>
    <location>
        <position position="204" evidence="2"/>
    </location>
    <location>
        <position position="218" evidence="2"/>
    </location>
    <location>
        <position position="254" evidence="2"/>
    </location>
    <location>
        <position position="261" evidence="2"/>
    </location>
    <location>
        <position position="266" evidence="2"/>
    </location>
    <location>
        <position position="278" evidence="2"/>
    </location>
    <location>
        <position position="282" evidence="2"/>
    </location>
    <text>The stop codon at position 282 is created by RNA editing.</text>
</comment>
<comment type="similarity">
    <text evidence="3">Belongs to the ATPase A chain family.</text>
</comment>